<dbReference type="EMBL" id="DQ447653">
    <property type="protein sequence ID" value="ABE27017.1"/>
    <property type="molecule type" value="Genomic_RNA"/>
</dbReference>
<dbReference type="EMBL" id="DQ447655">
    <property type="protein sequence ID" value="ABE27031.1"/>
    <property type="molecule type" value="Genomic_RNA"/>
</dbReference>
<dbReference type="EMBL" id="DQ447657">
    <property type="protein sequence ID" value="ABE27045.1"/>
    <property type="molecule type" value="Genomic_RNA"/>
</dbReference>
<dbReference type="EMBL" id="DQ447658">
    <property type="protein sequence ID" value="ABE27052.1"/>
    <property type="molecule type" value="Genomic_RNA"/>
</dbReference>
<dbReference type="SMR" id="Q1PD62"/>
<dbReference type="Proteomes" id="UP000008242">
    <property type="component" value="Genome"/>
</dbReference>
<dbReference type="Proteomes" id="UP000115353">
    <property type="component" value="Genome"/>
</dbReference>
<dbReference type="Proteomes" id="UP000130744">
    <property type="component" value="Genome"/>
</dbReference>
<dbReference type="Proteomes" id="UP000171838">
    <property type="component" value="Genome"/>
</dbReference>
<dbReference type="GO" id="GO:0033645">
    <property type="term" value="C:host cell endomembrane system"/>
    <property type="evidence" value="ECO:0007669"/>
    <property type="project" value="UniProtKB-SubCell"/>
</dbReference>
<dbReference type="GO" id="GO:0020002">
    <property type="term" value="C:host cell plasma membrane"/>
    <property type="evidence" value="ECO:0007669"/>
    <property type="project" value="UniProtKB-SubCell"/>
</dbReference>
<dbReference type="GO" id="GO:0016020">
    <property type="term" value="C:membrane"/>
    <property type="evidence" value="ECO:0007669"/>
    <property type="project" value="UniProtKB-KW"/>
</dbReference>
<dbReference type="GO" id="GO:0055036">
    <property type="term" value="C:virion membrane"/>
    <property type="evidence" value="ECO:0007669"/>
    <property type="project" value="UniProtKB-SubCell"/>
</dbReference>
<dbReference type="GO" id="GO:0039660">
    <property type="term" value="F:structural constituent of virion"/>
    <property type="evidence" value="ECO:0007669"/>
    <property type="project" value="UniProtKB-KW"/>
</dbReference>
<dbReference type="GO" id="GO:0016032">
    <property type="term" value="P:viral process"/>
    <property type="evidence" value="ECO:0007669"/>
    <property type="project" value="InterPro"/>
</dbReference>
<dbReference type="InterPro" id="IPR009433">
    <property type="entry name" value="Filo_VP24"/>
</dbReference>
<dbReference type="Pfam" id="PF06389">
    <property type="entry name" value="Filo_VP24"/>
    <property type="match status" value="1"/>
</dbReference>
<dbReference type="PIRSF" id="PIRSF011355">
    <property type="entry name" value="VP24"/>
    <property type="match status" value="1"/>
</dbReference>
<gene>
    <name type="primary">VP24</name>
</gene>
<protein>
    <recommendedName>
        <fullName>Membrane-associated protein VP24</fullName>
    </recommendedName>
    <alternativeName>
        <fullName>Marburg VP24</fullName>
        <shortName>mVP24</shortName>
    </alternativeName>
</protein>
<feature type="chain" id="PRO_0000314989" description="Membrane-associated protein VP24">
    <location>
        <begin position="1"/>
        <end position="253"/>
    </location>
</feature>
<keyword id="KW-1032">Host cell membrane</keyword>
<keyword id="KW-1043">Host membrane</keyword>
<keyword id="KW-0472">Membrane</keyword>
<keyword id="KW-0468">Viral matrix protein</keyword>
<keyword id="KW-0946">Virion</keyword>
<evidence type="ECO:0000250" key="1"/>
<evidence type="ECO:0000250" key="2">
    <source>
        <dbReference type="UniProtKB" id="P35256"/>
    </source>
</evidence>
<evidence type="ECO:0000305" key="3"/>
<name>VP24_MABVA</name>
<organismHost>
    <name type="scientific">Chlorocebus aethiops</name>
    <name type="common">Green monkey</name>
    <name type="synonym">Cercopithecus aethiops</name>
    <dbReference type="NCBI Taxonomy" id="9534"/>
</organismHost>
<organismHost>
    <name type="scientific">Homo sapiens</name>
    <name type="common">Human</name>
    <dbReference type="NCBI Taxonomy" id="9606"/>
</organismHost>
<organismHost>
    <name type="scientific">Rousettus aegyptiacus</name>
    <name type="common">Egyptian fruit bat</name>
    <name type="synonym">Pteropus aegyptiacus</name>
    <dbReference type="NCBI Taxonomy" id="9407"/>
</organismHost>
<sequence length="253" mass="28705">MAELSTRYNLPVNVTEKSINLDLNSTARWIKEPSVGGWTVKWGNFVFHIPNTGMTLLHHLKSNFVVPEWQQTRNLFSHLFKNPKSTIIEPFLALRILLGVALKDQELQQSLIPGFRSIVHMLSEWLLLEVTSAIHISPNLLGIYLTSDMFKILMAGVKNFFNKMFTLHVVNDHGKPSSIEIKLTGQQIIITRVNMGFLVEVRRIDIEPCCGETVLLESVVFGLVAEAVLREHSQMEKGQPLNLTQYMNSKIAI</sequence>
<proteinExistence type="inferred from homology"/>
<comment type="function">
    <text evidence="2">May act as a minor matrix protein that plays a role in assembly of viral nucleocapsid and virion budding. Unlike Ebola VP24, mVP24 has no measurable impact of host dendritic cell function.</text>
</comment>
<comment type="subunit">
    <text evidence="1 3">Monomer or homotetramer (Potential). Interacts with the nucleoprotein (By similarity).</text>
</comment>
<comment type="subcellular location">
    <subcellularLocation>
        <location evidence="1">Virion membrane</location>
        <topology evidence="1">Peripheral membrane protein</topology>
    </subcellularLocation>
    <subcellularLocation>
        <location evidence="1">Host cell membrane</location>
        <topology evidence="1">Peripheral membrane protein</topology>
        <orientation evidence="1">Cytoplasmic side</orientation>
    </subcellularLocation>
    <subcellularLocation>
        <location evidence="1">Host endomembrane system</location>
        <topology evidence="1">Peripheral membrane protein</topology>
    </subcellularLocation>
    <text evidence="1">In virion, localizes on the intravirional side of the membrane. In the host cell, it is found associated with virus-induced membrane proliferation foci and to the plasma membrane where budding takes place (By similarity).</text>
</comment>
<comment type="similarity">
    <text evidence="3">Belongs to the filoviridae membrane-associated protein VP24 family.</text>
</comment>
<organism>
    <name type="scientific">Lake Victoria marburgvirus (strain Angola/2005)</name>
    <name type="common">MARV</name>
    <dbReference type="NCBI Taxonomy" id="378830"/>
    <lineage>
        <taxon>Viruses</taxon>
        <taxon>Riboviria</taxon>
        <taxon>Orthornavirae</taxon>
        <taxon>Negarnaviricota</taxon>
        <taxon>Haploviricotina</taxon>
        <taxon>Monjiviricetes</taxon>
        <taxon>Mononegavirales</taxon>
        <taxon>Filoviridae</taxon>
        <taxon>Orthomarburgvirus</taxon>
        <taxon>Orthomarburgvirus marburgense</taxon>
    </lineage>
</organism>
<reference key="1">
    <citation type="journal article" date="2006" name="J. Virol.">
        <title>Marburgvirus genomics and association with a large hemorrhagic fever outbreak in Angola.</title>
        <authorList>
            <person name="Towner J.S."/>
            <person name="Khristova M.L."/>
            <person name="Sealy T.K."/>
            <person name="Vincent M.J."/>
            <person name="Erickson B.R."/>
            <person name="Bawiec D.A."/>
            <person name="Hartman A.L."/>
            <person name="Comer J.A."/>
            <person name="Zaki S.R."/>
            <person name="Stroeher U."/>
            <person name="Gomes da Silva F."/>
            <person name="del Castillo F."/>
            <person name="Rollin P.E."/>
            <person name="Ksiazek T.G."/>
            <person name="Nichol S.T."/>
        </authorList>
    </citation>
    <scope>NUCLEOTIDE SEQUENCE [GENOMIC RNA]</scope>
    <source>
        <strain>Isolate Ang0214</strain>
        <strain>Isolate Ang0215</strain>
        <strain>Isolate Ang1379c</strain>
        <strain>Isolate Ang1386</strain>
    </source>
</reference>
<accession>Q1PD62</accession>